<reference key="1">
    <citation type="submission" date="2008-08" db="EMBL/GenBank/DDBJ databases">
        <title>Complete sequence of Anaeromyxobacter sp. K.</title>
        <authorList>
            <consortium name="US DOE Joint Genome Institute"/>
            <person name="Lucas S."/>
            <person name="Copeland A."/>
            <person name="Lapidus A."/>
            <person name="Glavina del Rio T."/>
            <person name="Dalin E."/>
            <person name="Tice H."/>
            <person name="Bruce D."/>
            <person name="Goodwin L."/>
            <person name="Pitluck S."/>
            <person name="Saunders E."/>
            <person name="Brettin T."/>
            <person name="Detter J.C."/>
            <person name="Han C."/>
            <person name="Larimer F."/>
            <person name="Land M."/>
            <person name="Hauser L."/>
            <person name="Kyrpides N."/>
            <person name="Ovchinnikiva G."/>
            <person name="Beliaev A."/>
        </authorList>
    </citation>
    <scope>NUCLEOTIDE SEQUENCE [LARGE SCALE GENOMIC DNA]</scope>
    <source>
        <strain>K</strain>
    </source>
</reference>
<organism>
    <name type="scientific">Anaeromyxobacter sp. (strain K)</name>
    <dbReference type="NCBI Taxonomy" id="447217"/>
    <lineage>
        <taxon>Bacteria</taxon>
        <taxon>Pseudomonadati</taxon>
        <taxon>Myxococcota</taxon>
        <taxon>Myxococcia</taxon>
        <taxon>Myxococcales</taxon>
        <taxon>Cystobacterineae</taxon>
        <taxon>Anaeromyxobacteraceae</taxon>
        <taxon>Anaeromyxobacter</taxon>
    </lineage>
</organism>
<comment type="function">
    <text evidence="1">DNA ligase that catalyzes the formation of phosphodiester linkages between 5'-phosphoryl and 3'-hydroxyl groups in double-stranded DNA using NAD as a coenzyme and as the energy source for the reaction. It is essential for DNA replication and repair of damaged DNA.</text>
</comment>
<comment type="catalytic activity">
    <reaction evidence="1">
        <text>NAD(+) + (deoxyribonucleotide)n-3'-hydroxyl + 5'-phospho-(deoxyribonucleotide)m = (deoxyribonucleotide)n+m + AMP + beta-nicotinamide D-nucleotide.</text>
        <dbReference type="EC" id="6.5.1.2"/>
    </reaction>
</comment>
<comment type="cofactor">
    <cofactor evidence="1">
        <name>Mg(2+)</name>
        <dbReference type="ChEBI" id="CHEBI:18420"/>
    </cofactor>
    <cofactor evidence="1">
        <name>Mn(2+)</name>
        <dbReference type="ChEBI" id="CHEBI:29035"/>
    </cofactor>
</comment>
<comment type="similarity">
    <text evidence="1">Belongs to the NAD-dependent DNA ligase family. LigA subfamily.</text>
</comment>
<keyword id="KW-0227">DNA damage</keyword>
<keyword id="KW-0234">DNA repair</keyword>
<keyword id="KW-0235">DNA replication</keyword>
<keyword id="KW-0436">Ligase</keyword>
<keyword id="KW-0460">Magnesium</keyword>
<keyword id="KW-0464">Manganese</keyword>
<keyword id="KW-0479">Metal-binding</keyword>
<keyword id="KW-0520">NAD</keyword>
<keyword id="KW-0862">Zinc</keyword>
<protein>
    <recommendedName>
        <fullName evidence="1">DNA ligase</fullName>
        <ecNumber evidence="1">6.5.1.2</ecNumber>
    </recommendedName>
    <alternativeName>
        <fullName evidence="1">Polydeoxyribonucleotide synthase [NAD(+)]</fullName>
    </alternativeName>
</protein>
<gene>
    <name evidence="1" type="primary">ligA</name>
    <name type="ordered locus">AnaeK_0728</name>
</gene>
<feature type="chain" id="PRO_0000380290" description="DNA ligase">
    <location>
        <begin position="1"/>
        <end position="687"/>
    </location>
</feature>
<feature type="domain" description="BRCT" evidence="1">
    <location>
        <begin position="609"/>
        <end position="687"/>
    </location>
</feature>
<feature type="active site" description="N6-AMP-lysine intermediate" evidence="1">
    <location>
        <position position="119"/>
    </location>
</feature>
<feature type="binding site" evidence="1">
    <location>
        <begin position="34"/>
        <end position="38"/>
    </location>
    <ligand>
        <name>NAD(+)</name>
        <dbReference type="ChEBI" id="CHEBI:57540"/>
    </ligand>
</feature>
<feature type="binding site" evidence="1">
    <location>
        <begin position="83"/>
        <end position="84"/>
    </location>
    <ligand>
        <name>NAD(+)</name>
        <dbReference type="ChEBI" id="CHEBI:57540"/>
    </ligand>
</feature>
<feature type="binding site" evidence="1">
    <location>
        <position position="117"/>
    </location>
    <ligand>
        <name>NAD(+)</name>
        <dbReference type="ChEBI" id="CHEBI:57540"/>
    </ligand>
</feature>
<feature type="binding site" evidence="1">
    <location>
        <position position="140"/>
    </location>
    <ligand>
        <name>NAD(+)</name>
        <dbReference type="ChEBI" id="CHEBI:57540"/>
    </ligand>
</feature>
<feature type="binding site" evidence="1">
    <location>
        <position position="182"/>
    </location>
    <ligand>
        <name>NAD(+)</name>
        <dbReference type="ChEBI" id="CHEBI:57540"/>
    </ligand>
</feature>
<feature type="binding site" evidence="1">
    <location>
        <position position="298"/>
    </location>
    <ligand>
        <name>NAD(+)</name>
        <dbReference type="ChEBI" id="CHEBI:57540"/>
    </ligand>
</feature>
<feature type="binding site" evidence="1">
    <location>
        <position position="322"/>
    </location>
    <ligand>
        <name>NAD(+)</name>
        <dbReference type="ChEBI" id="CHEBI:57540"/>
    </ligand>
</feature>
<feature type="binding site" evidence="1">
    <location>
        <position position="416"/>
    </location>
    <ligand>
        <name>Zn(2+)</name>
        <dbReference type="ChEBI" id="CHEBI:29105"/>
    </ligand>
</feature>
<feature type="binding site" evidence="1">
    <location>
        <position position="419"/>
    </location>
    <ligand>
        <name>Zn(2+)</name>
        <dbReference type="ChEBI" id="CHEBI:29105"/>
    </ligand>
</feature>
<feature type="binding site" evidence="1">
    <location>
        <position position="434"/>
    </location>
    <ligand>
        <name>Zn(2+)</name>
        <dbReference type="ChEBI" id="CHEBI:29105"/>
    </ligand>
</feature>
<feature type="binding site" evidence="1">
    <location>
        <position position="439"/>
    </location>
    <ligand>
        <name>Zn(2+)</name>
        <dbReference type="ChEBI" id="CHEBI:29105"/>
    </ligand>
</feature>
<dbReference type="EC" id="6.5.1.2" evidence="1"/>
<dbReference type="EMBL" id="CP001131">
    <property type="protein sequence ID" value="ACG71967.1"/>
    <property type="molecule type" value="Genomic_DNA"/>
</dbReference>
<dbReference type="RefSeq" id="WP_012524795.1">
    <property type="nucleotide sequence ID" value="NC_011145.1"/>
</dbReference>
<dbReference type="SMR" id="B4UDH6"/>
<dbReference type="KEGG" id="ank:AnaeK_0728"/>
<dbReference type="HOGENOM" id="CLU_007764_2_1_7"/>
<dbReference type="OrthoDB" id="9759736at2"/>
<dbReference type="Proteomes" id="UP000001871">
    <property type="component" value="Chromosome"/>
</dbReference>
<dbReference type="GO" id="GO:0005829">
    <property type="term" value="C:cytosol"/>
    <property type="evidence" value="ECO:0007669"/>
    <property type="project" value="TreeGrafter"/>
</dbReference>
<dbReference type="GO" id="GO:0003677">
    <property type="term" value="F:DNA binding"/>
    <property type="evidence" value="ECO:0007669"/>
    <property type="project" value="InterPro"/>
</dbReference>
<dbReference type="GO" id="GO:0003911">
    <property type="term" value="F:DNA ligase (NAD+) activity"/>
    <property type="evidence" value="ECO:0007669"/>
    <property type="project" value="UniProtKB-UniRule"/>
</dbReference>
<dbReference type="GO" id="GO:0046872">
    <property type="term" value="F:metal ion binding"/>
    <property type="evidence" value="ECO:0007669"/>
    <property type="project" value="UniProtKB-KW"/>
</dbReference>
<dbReference type="GO" id="GO:0006281">
    <property type="term" value="P:DNA repair"/>
    <property type="evidence" value="ECO:0007669"/>
    <property type="project" value="UniProtKB-KW"/>
</dbReference>
<dbReference type="GO" id="GO:0006260">
    <property type="term" value="P:DNA replication"/>
    <property type="evidence" value="ECO:0007669"/>
    <property type="project" value="UniProtKB-KW"/>
</dbReference>
<dbReference type="CDD" id="cd17748">
    <property type="entry name" value="BRCT_DNA_ligase_like"/>
    <property type="match status" value="1"/>
</dbReference>
<dbReference type="CDD" id="cd00114">
    <property type="entry name" value="LIGANc"/>
    <property type="match status" value="1"/>
</dbReference>
<dbReference type="FunFam" id="1.10.150.20:FF:000006">
    <property type="entry name" value="DNA ligase"/>
    <property type="match status" value="1"/>
</dbReference>
<dbReference type="FunFam" id="1.10.287.610:FF:000002">
    <property type="entry name" value="DNA ligase"/>
    <property type="match status" value="1"/>
</dbReference>
<dbReference type="Gene3D" id="6.20.10.30">
    <property type="match status" value="1"/>
</dbReference>
<dbReference type="Gene3D" id="1.10.150.20">
    <property type="entry name" value="5' to 3' exonuclease, C-terminal subdomain"/>
    <property type="match status" value="2"/>
</dbReference>
<dbReference type="Gene3D" id="3.40.50.10190">
    <property type="entry name" value="BRCT domain"/>
    <property type="match status" value="1"/>
</dbReference>
<dbReference type="Gene3D" id="3.30.470.30">
    <property type="entry name" value="DNA ligase/mRNA capping enzyme"/>
    <property type="match status" value="1"/>
</dbReference>
<dbReference type="Gene3D" id="1.10.287.610">
    <property type="entry name" value="Helix hairpin bin"/>
    <property type="match status" value="1"/>
</dbReference>
<dbReference type="Gene3D" id="2.40.50.140">
    <property type="entry name" value="Nucleic acid-binding proteins"/>
    <property type="match status" value="1"/>
</dbReference>
<dbReference type="HAMAP" id="MF_01588">
    <property type="entry name" value="DNA_ligase_A"/>
    <property type="match status" value="1"/>
</dbReference>
<dbReference type="InterPro" id="IPR001357">
    <property type="entry name" value="BRCT_dom"/>
</dbReference>
<dbReference type="InterPro" id="IPR036420">
    <property type="entry name" value="BRCT_dom_sf"/>
</dbReference>
<dbReference type="InterPro" id="IPR041663">
    <property type="entry name" value="DisA/LigA_HHH"/>
</dbReference>
<dbReference type="InterPro" id="IPR001679">
    <property type="entry name" value="DNA_ligase"/>
</dbReference>
<dbReference type="InterPro" id="IPR018239">
    <property type="entry name" value="DNA_ligase_AS"/>
</dbReference>
<dbReference type="InterPro" id="IPR033136">
    <property type="entry name" value="DNA_ligase_CS"/>
</dbReference>
<dbReference type="InterPro" id="IPR013839">
    <property type="entry name" value="DNAligase_adenylation"/>
</dbReference>
<dbReference type="InterPro" id="IPR013840">
    <property type="entry name" value="DNAligase_N"/>
</dbReference>
<dbReference type="InterPro" id="IPR003583">
    <property type="entry name" value="Hlx-hairpin-Hlx_DNA-bd_motif"/>
</dbReference>
<dbReference type="InterPro" id="IPR012340">
    <property type="entry name" value="NA-bd_OB-fold"/>
</dbReference>
<dbReference type="InterPro" id="IPR004150">
    <property type="entry name" value="NAD_DNA_ligase_OB"/>
</dbReference>
<dbReference type="InterPro" id="IPR010994">
    <property type="entry name" value="RuvA_2-like"/>
</dbReference>
<dbReference type="InterPro" id="IPR004149">
    <property type="entry name" value="Znf_DNAligase_C4"/>
</dbReference>
<dbReference type="NCBIfam" id="TIGR00575">
    <property type="entry name" value="dnlj"/>
    <property type="match status" value="1"/>
</dbReference>
<dbReference type="NCBIfam" id="NF005932">
    <property type="entry name" value="PRK07956.1"/>
    <property type="match status" value="1"/>
</dbReference>
<dbReference type="PANTHER" id="PTHR23389">
    <property type="entry name" value="CHROMOSOME TRANSMISSION FIDELITY FACTOR 18"/>
    <property type="match status" value="1"/>
</dbReference>
<dbReference type="PANTHER" id="PTHR23389:SF9">
    <property type="entry name" value="DNA LIGASE"/>
    <property type="match status" value="1"/>
</dbReference>
<dbReference type="Pfam" id="PF00533">
    <property type="entry name" value="BRCT"/>
    <property type="match status" value="1"/>
</dbReference>
<dbReference type="Pfam" id="PF01653">
    <property type="entry name" value="DNA_ligase_aden"/>
    <property type="match status" value="1"/>
</dbReference>
<dbReference type="Pfam" id="PF03120">
    <property type="entry name" value="DNA_ligase_OB"/>
    <property type="match status" value="1"/>
</dbReference>
<dbReference type="Pfam" id="PF03119">
    <property type="entry name" value="DNA_ligase_ZBD"/>
    <property type="match status" value="1"/>
</dbReference>
<dbReference type="Pfam" id="PF12826">
    <property type="entry name" value="HHH_2"/>
    <property type="match status" value="1"/>
</dbReference>
<dbReference type="Pfam" id="PF22745">
    <property type="entry name" value="Nlig-Ia"/>
    <property type="match status" value="1"/>
</dbReference>
<dbReference type="PIRSF" id="PIRSF001604">
    <property type="entry name" value="LigA"/>
    <property type="match status" value="1"/>
</dbReference>
<dbReference type="SMART" id="SM00292">
    <property type="entry name" value="BRCT"/>
    <property type="match status" value="1"/>
</dbReference>
<dbReference type="SMART" id="SM00278">
    <property type="entry name" value="HhH1"/>
    <property type="match status" value="3"/>
</dbReference>
<dbReference type="SMART" id="SM00532">
    <property type="entry name" value="LIGANc"/>
    <property type="match status" value="1"/>
</dbReference>
<dbReference type="SUPFAM" id="SSF52113">
    <property type="entry name" value="BRCT domain"/>
    <property type="match status" value="1"/>
</dbReference>
<dbReference type="SUPFAM" id="SSF56091">
    <property type="entry name" value="DNA ligase/mRNA capping enzyme, catalytic domain"/>
    <property type="match status" value="1"/>
</dbReference>
<dbReference type="SUPFAM" id="SSF50249">
    <property type="entry name" value="Nucleic acid-binding proteins"/>
    <property type="match status" value="1"/>
</dbReference>
<dbReference type="SUPFAM" id="SSF47781">
    <property type="entry name" value="RuvA domain 2-like"/>
    <property type="match status" value="1"/>
</dbReference>
<dbReference type="PROSITE" id="PS50172">
    <property type="entry name" value="BRCT"/>
    <property type="match status" value="1"/>
</dbReference>
<dbReference type="PROSITE" id="PS01055">
    <property type="entry name" value="DNA_LIGASE_N1"/>
    <property type="match status" value="1"/>
</dbReference>
<dbReference type="PROSITE" id="PS01056">
    <property type="entry name" value="DNA_LIGASE_N2"/>
    <property type="match status" value="1"/>
</dbReference>
<sequence length="687" mass="76330">MKKADAPARARELRDRIRAADHAYYVLDQPLLADAEYDRLMHELQALEADHPELVTADSPTQRVSGAPSERFERVVHREPMLSLGNVQSDDELQEFDARVRRLLGLPDGEPVGYVVEPKLDGLAVELVYRDGAFTSGSTRGDGVNGEDVTANLRVVGGLGANRGVPHALEGRPPPRVEVRGEVLLFKEHFEAMNRQLVRAGEAPFANPRNAAAGTLRQLDWRVTARRPLSFIAYEALLPGDDPWRTHWEKLEELAAWGFETNAENRRCRGLAEVLAYRDRMAERRFELPYDTDGIVVKVDDLDWRRRLGAASKFPRWAVAFKYPPQEEATRIRRIWASVGRTGVLTPVVDFDPVRLSGAMVARATLHNEDEMRRKDILEGDWVLVRRAGEVIPEVVKPLPERRTGAEQPFRFPAECPVCGARVVREEGEKVYRCTGAACPAQLVGRLCHFAQRRALDIEGLGEKLAAGLVERGQVKDFADLYAVPFEVWQQLFSRPRKEQDAGAARELPEKSAQNMVAALERSRKTTLRRFLFALGIPQVGEATAATLARHFGGLARVMDADEEALKGVRDVGPETAAEIRAWTQEPQNRRVVERLLAAGVTPEAEVVEARGPFAGKTVVLTGGLSTMSRDDAKAEIERRGGRVSGSVSRKTDLVVAGEDAGSKLEKARSLGVRIAGEEEFVRLLKE</sequence>
<evidence type="ECO:0000255" key="1">
    <source>
        <dbReference type="HAMAP-Rule" id="MF_01588"/>
    </source>
</evidence>
<proteinExistence type="inferred from homology"/>
<accession>B4UDH6</accession>
<name>DNLJ_ANASK</name>